<name>DPOL_PYRAB</name>
<proteinExistence type="evidence at protein level"/>
<sequence length="771" mass="89496">MIIDADYITEDGKPIIRIFKKEKGEFKVEYDRTFRPYIYALLKDDSAIDEVKKITAERHGKIVRITEVEKVQKKFLGRPIEVWKLYLEHPQDVPAIREKIREHPAVVDIFEYDIPFAKRYLIDKGLTPMEGNEELTFLAVDIETLYHEGEEFGKGPIIMISYADEEGAKVITWKSIDLPYVEVVSSEREMIKRLVKVIREKDPDVIITYNGDNFDFPYLLKRAEKLGIKLPLGRDNSEPKMQRMGDSLAVEIKGRIHFDLFPVIRRTINLPTYTLEAVYEAIFGKSKEKVYAHEIAEAWETGKGLERVAKYSMEDAKVTFELGKEFFPMEAQLARLVGQPVWDVSRSSTGNLVEWFLLRKAYERNELAPNKPDEREYERRLRESYEGGYVKEPEKGLWEGIVSLDFRSLYPSIIITHNVSPDTLNRENCKEYDVAPQVGHRFCKDFPGFIPSLLGNLLEERQKIKKRMKESKDPVEKKLLDYRQRAIKILANSYYGYYGYAKARWYCKECAESVTAWGRQYIDLVRRELESRGFKVLYIDTDGLYATIPGAKHEEIKEKALKFVEYINSKLPGLLELEYEGFYARGFFVTKKKYALIDEEGKIVTRGLEIVRRDWSEIAKETQAKVLEAILKHGNVDEAVKIVKEVTEKLSKYEIPPEKLVIYEQITRPLSEYKAIGPHVAVAKRLAAKGVKVKPGMVIGYIVLRGDGPISKRAIAIEEFDPKKHKYDAEYYIENQVLPAVERILRAFGYRKEDLKYQKTKQVGLGAWLKF</sequence>
<comment type="catalytic activity">
    <reaction>
        <text>DNA(n) + a 2'-deoxyribonucleoside 5'-triphosphate = DNA(n+1) + diphosphate</text>
        <dbReference type="Rhea" id="RHEA:22508"/>
        <dbReference type="Rhea" id="RHEA-COMP:17339"/>
        <dbReference type="Rhea" id="RHEA-COMP:17340"/>
        <dbReference type="ChEBI" id="CHEBI:33019"/>
        <dbReference type="ChEBI" id="CHEBI:61560"/>
        <dbReference type="ChEBI" id="CHEBI:173112"/>
        <dbReference type="EC" id="2.7.7.7"/>
    </reaction>
</comment>
<comment type="similarity">
    <text evidence="1">Belongs to the DNA polymerase type-B family.</text>
</comment>
<reference key="1">
    <citation type="journal article" date="2003" name="Mol. Microbiol.">
        <title>An integrated analysis of the genome of the hyperthermophilic archaeon Pyrococcus abyssi.</title>
        <authorList>
            <person name="Cohen G.N."/>
            <person name="Barbe V."/>
            <person name="Flament D."/>
            <person name="Galperin M."/>
            <person name="Heilig R."/>
            <person name="Lecompte O."/>
            <person name="Poch O."/>
            <person name="Prieur D."/>
            <person name="Querellou J."/>
            <person name="Ripp R."/>
            <person name="Thierry J.-C."/>
            <person name="Van der Oost J."/>
            <person name="Weissenbach J."/>
            <person name="Zivanovic Y."/>
            <person name="Forterre P."/>
        </authorList>
    </citation>
    <scope>NUCLEOTIDE SEQUENCE [LARGE SCALE GENOMIC DNA]</scope>
    <source>
        <strain>GE5 / Orsay</strain>
    </source>
</reference>
<reference key="2">
    <citation type="journal article" date="2012" name="Curr. Microbiol.">
        <title>Re-annotation of two hyperthermophilic archaea Pyrococcus abyssi GE5 and Pyrococcus furiosus DSM 3638.</title>
        <authorList>
            <person name="Gao J."/>
            <person name="Wang J."/>
        </authorList>
    </citation>
    <scope>GENOME REANNOTATION</scope>
    <source>
        <strain>GE5 / Orsay</strain>
    </source>
</reference>
<organism>
    <name type="scientific">Pyrococcus abyssi (strain GE5 / Orsay)</name>
    <dbReference type="NCBI Taxonomy" id="272844"/>
    <lineage>
        <taxon>Archaea</taxon>
        <taxon>Methanobacteriati</taxon>
        <taxon>Methanobacteriota</taxon>
        <taxon>Thermococci</taxon>
        <taxon>Thermococcales</taxon>
        <taxon>Thermococcaceae</taxon>
        <taxon>Pyrococcus</taxon>
    </lineage>
</organism>
<accession>P0CL77</accession>
<accession>G8ZK85</accession>
<accession>P77916</accession>
<accession>P77932</accession>
<feature type="chain" id="PRO_0000407283" description="DNA polymerase 1">
    <location>
        <begin position="1"/>
        <end position="771"/>
    </location>
</feature>
<feature type="strand" evidence="2">
    <location>
        <begin position="1"/>
        <end position="10"/>
    </location>
</feature>
<feature type="strand" evidence="2">
    <location>
        <begin position="13"/>
        <end position="22"/>
    </location>
</feature>
<feature type="strand" evidence="2">
    <location>
        <begin position="25"/>
        <end position="32"/>
    </location>
</feature>
<feature type="strand" evidence="2">
    <location>
        <begin position="37"/>
        <end position="44"/>
    </location>
</feature>
<feature type="helix" evidence="2">
    <location>
        <begin position="45"/>
        <end position="47"/>
    </location>
</feature>
<feature type="helix" evidence="2">
    <location>
        <begin position="48"/>
        <end position="51"/>
    </location>
</feature>
<feature type="strand" evidence="2">
    <location>
        <begin position="55"/>
        <end position="58"/>
    </location>
</feature>
<feature type="strand" evidence="2">
    <location>
        <begin position="61"/>
        <end position="64"/>
    </location>
</feature>
<feature type="strand" evidence="2">
    <location>
        <begin position="67"/>
        <end position="75"/>
    </location>
</feature>
<feature type="strand" evidence="2">
    <location>
        <begin position="78"/>
        <end position="86"/>
    </location>
</feature>
<feature type="helix" evidence="2">
    <location>
        <begin position="92"/>
        <end position="101"/>
    </location>
</feature>
<feature type="strand" evidence="2">
    <location>
        <begin position="106"/>
        <end position="111"/>
    </location>
</feature>
<feature type="helix" evidence="2">
    <location>
        <begin position="116"/>
        <end position="123"/>
    </location>
</feature>
<feature type="strand" evidence="2">
    <location>
        <begin position="137"/>
        <end position="144"/>
    </location>
</feature>
<feature type="strand" evidence="2">
    <location>
        <begin position="157"/>
        <end position="164"/>
    </location>
</feature>
<feature type="strand" evidence="2">
    <location>
        <begin position="167"/>
        <end position="174"/>
    </location>
</feature>
<feature type="strand" evidence="2">
    <location>
        <begin position="181"/>
        <end position="183"/>
    </location>
</feature>
<feature type="helix" evidence="2">
    <location>
        <begin position="187"/>
        <end position="201"/>
    </location>
</feature>
<feature type="strand" evidence="2">
    <location>
        <begin position="204"/>
        <end position="210"/>
    </location>
</feature>
<feature type="turn" evidence="2">
    <location>
        <begin position="211"/>
        <end position="214"/>
    </location>
</feature>
<feature type="helix" evidence="2">
    <location>
        <begin position="215"/>
        <end position="225"/>
    </location>
</feature>
<feature type="strand" evidence="2">
    <location>
        <begin position="240"/>
        <end position="244"/>
    </location>
</feature>
<feature type="strand" evidence="2">
    <location>
        <begin position="247"/>
        <end position="251"/>
    </location>
</feature>
<feature type="strand" evidence="2">
    <location>
        <begin position="255"/>
        <end position="259"/>
    </location>
</feature>
<feature type="helix" evidence="2">
    <location>
        <begin position="260"/>
        <end position="267"/>
    </location>
</feature>
<feature type="helix" evidence="2">
    <location>
        <begin position="275"/>
        <end position="283"/>
    </location>
</feature>
<feature type="helix" evidence="2">
    <location>
        <begin position="292"/>
        <end position="301"/>
    </location>
</feature>
<feature type="helix" evidence="2">
    <location>
        <begin position="305"/>
        <end position="337"/>
    </location>
</feature>
<feature type="helix" evidence="2">
    <location>
        <begin position="341"/>
        <end position="345"/>
    </location>
</feature>
<feature type="helix" evidence="2">
    <location>
        <begin position="349"/>
        <end position="364"/>
    </location>
</feature>
<feature type="helix" evidence="2">
    <location>
        <begin position="374"/>
        <end position="381"/>
    </location>
</feature>
<feature type="strand" evidence="2">
    <location>
        <begin position="398"/>
        <end position="405"/>
    </location>
</feature>
<feature type="helix" evidence="2">
    <location>
        <begin position="407"/>
        <end position="409"/>
    </location>
</feature>
<feature type="helix" evidence="2">
    <location>
        <begin position="410"/>
        <end position="416"/>
    </location>
</feature>
<feature type="turn" evidence="2">
    <location>
        <begin position="421"/>
        <end position="423"/>
    </location>
</feature>
<feature type="strand" evidence="2">
    <location>
        <begin position="430"/>
        <end position="434"/>
    </location>
</feature>
<feature type="turn" evidence="2">
    <location>
        <begin position="436"/>
        <end position="438"/>
    </location>
</feature>
<feature type="strand" evidence="2">
    <location>
        <begin position="441"/>
        <end position="443"/>
    </location>
</feature>
<feature type="helix" evidence="2">
    <location>
        <begin position="449"/>
        <end position="469"/>
    </location>
</feature>
<feature type="helix" evidence="2">
    <location>
        <begin position="474"/>
        <end position="491"/>
    </location>
</feature>
<feature type="helix" evidence="2">
    <location>
        <begin position="494"/>
        <end position="498"/>
    </location>
</feature>
<feature type="helix" evidence="2">
    <location>
        <begin position="508"/>
        <end position="531"/>
    </location>
</feature>
<feature type="strand" evidence="2">
    <location>
        <begin position="535"/>
        <end position="539"/>
    </location>
</feature>
<feature type="strand" evidence="2">
    <location>
        <begin position="541"/>
        <end position="547"/>
    </location>
</feature>
<feature type="helix" evidence="2">
    <location>
        <begin position="553"/>
        <end position="570"/>
    </location>
</feature>
<feature type="strand" evidence="2">
    <location>
        <begin position="578"/>
        <end position="590"/>
    </location>
</feature>
<feature type="strand" evidence="2">
    <location>
        <begin position="593"/>
        <end position="597"/>
    </location>
</feature>
<feature type="strand" evidence="2">
    <location>
        <begin position="603"/>
        <end position="607"/>
    </location>
</feature>
<feature type="helix" evidence="2">
    <location>
        <begin position="617"/>
        <end position="631"/>
    </location>
</feature>
<feature type="helix" evidence="2">
    <location>
        <begin position="636"/>
        <end position="651"/>
    </location>
</feature>
<feature type="helix" evidence="2">
    <location>
        <begin position="657"/>
        <end position="660"/>
    </location>
</feature>
<feature type="strand" evidence="2">
    <location>
        <begin position="662"/>
        <end position="665"/>
    </location>
</feature>
<feature type="helix" evidence="2">
    <location>
        <begin position="670"/>
        <end position="672"/>
    </location>
</feature>
<feature type="helix" evidence="2">
    <location>
        <begin position="678"/>
        <end position="688"/>
    </location>
</feature>
<feature type="strand" evidence="2">
    <location>
        <begin position="698"/>
        <end position="705"/>
    </location>
</feature>
<feature type="helix" evidence="2">
    <location>
        <begin position="710"/>
        <end position="712"/>
    </location>
</feature>
<feature type="strand" evidence="2">
    <location>
        <begin position="714"/>
        <end position="716"/>
    </location>
</feature>
<feature type="helix" evidence="2">
    <location>
        <begin position="717"/>
        <end position="719"/>
    </location>
</feature>
<feature type="turn" evidence="2">
    <location>
        <begin position="722"/>
        <end position="724"/>
    </location>
</feature>
<feature type="helix" evidence="2">
    <location>
        <begin position="729"/>
        <end position="734"/>
    </location>
</feature>
<feature type="helix" evidence="2">
    <location>
        <begin position="737"/>
        <end position="746"/>
    </location>
</feature>
<feature type="turn" evidence="2">
    <location>
        <begin position="747"/>
        <end position="749"/>
    </location>
</feature>
<feature type="helix" evidence="2">
    <location>
        <begin position="752"/>
        <end position="754"/>
    </location>
</feature>
<gene>
    <name type="primary">polI</name>
    <name type="synonym">pol</name>
    <name type="ordered locus">PYRAB17200</name>
    <name type="ORF">PAB1128</name>
</gene>
<evidence type="ECO:0000305" key="1"/>
<evidence type="ECO:0007829" key="2">
    <source>
        <dbReference type="PDB" id="4FLW"/>
    </source>
</evidence>
<dbReference type="EC" id="2.7.7.7"/>
<dbReference type="EMBL" id="AJ248288">
    <property type="protein sequence ID" value="CAB50625.1"/>
    <property type="molecule type" value="Genomic_DNA"/>
</dbReference>
<dbReference type="EMBL" id="HE613800">
    <property type="protein sequence ID" value="CCE71192.1"/>
    <property type="molecule type" value="Genomic_DNA"/>
</dbReference>
<dbReference type="PIR" id="C75023">
    <property type="entry name" value="C75023"/>
</dbReference>
<dbReference type="RefSeq" id="WP_010868838.1">
    <property type="nucleotide sequence ID" value="NC_000868.1"/>
</dbReference>
<dbReference type="PDB" id="4FLT">
    <property type="method" value="X-ray"/>
    <property type="resolution" value="2.90 A"/>
    <property type="chains" value="A=1-771"/>
</dbReference>
<dbReference type="PDB" id="4FLV">
    <property type="method" value="X-ray"/>
    <property type="resolution" value="2.70 A"/>
    <property type="chains" value="A=1-771"/>
</dbReference>
<dbReference type="PDB" id="4FLW">
    <property type="method" value="X-ray"/>
    <property type="resolution" value="2.15 A"/>
    <property type="chains" value="A=1-771"/>
</dbReference>
<dbReference type="PDB" id="4FLX">
    <property type="method" value="X-ray"/>
    <property type="resolution" value="2.90 A"/>
    <property type="chains" value="A=1-771"/>
</dbReference>
<dbReference type="PDB" id="4FLY">
    <property type="method" value="X-ray"/>
    <property type="resolution" value="2.30 A"/>
    <property type="chains" value="A=1-771"/>
</dbReference>
<dbReference type="PDB" id="4FLZ">
    <property type="method" value="X-ray"/>
    <property type="resolution" value="3.20 A"/>
    <property type="chains" value="A=1-771"/>
</dbReference>
<dbReference type="PDB" id="4FM0">
    <property type="method" value="X-ray"/>
    <property type="resolution" value="3.12 A"/>
    <property type="chains" value="A=1-771"/>
</dbReference>
<dbReference type="PDB" id="4FM1">
    <property type="method" value="X-ray"/>
    <property type="resolution" value="3.00 A"/>
    <property type="chains" value="A=1-771"/>
</dbReference>
<dbReference type="PDB" id="4FM2">
    <property type="method" value="X-ray"/>
    <property type="resolution" value="2.90 A"/>
    <property type="chains" value="A=1-771"/>
</dbReference>
<dbReference type="PDBsum" id="4FLT"/>
<dbReference type="PDBsum" id="4FLV"/>
<dbReference type="PDBsum" id="4FLW"/>
<dbReference type="PDBsum" id="4FLX"/>
<dbReference type="PDBsum" id="4FLY"/>
<dbReference type="PDBsum" id="4FLZ"/>
<dbReference type="PDBsum" id="4FM0"/>
<dbReference type="PDBsum" id="4FM1"/>
<dbReference type="PDBsum" id="4FM2"/>
<dbReference type="SMR" id="P0CL77"/>
<dbReference type="STRING" id="272844.PAB1128"/>
<dbReference type="KEGG" id="pab:PAB1128"/>
<dbReference type="PATRIC" id="fig|272844.11.peg.1837"/>
<dbReference type="eggNOG" id="arCOG00328">
    <property type="taxonomic scope" value="Archaea"/>
</dbReference>
<dbReference type="HOGENOM" id="CLU_000203_6_0_2"/>
<dbReference type="OrthoDB" id="323192at2157"/>
<dbReference type="PhylomeDB" id="P0CL77"/>
<dbReference type="EvolutionaryTrace" id="P0CL77"/>
<dbReference type="Proteomes" id="UP000000810">
    <property type="component" value="Chromosome"/>
</dbReference>
<dbReference type="Proteomes" id="UP000009139">
    <property type="component" value="Chromosome"/>
</dbReference>
<dbReference type="GO" id="GO:0003677">
    <property type="term" value="F:DNA binding"/>
    <property type="evidence" value="ECO:0007669"/>
    <property type="project" value="UniProtKB-KW"/>
</dbReference>
<dbReference type="GO" id="GO:0003887">
    <property type="term" value="F:DNA-directed DNA polymerase activity"/>
    <property type="evidence" value="ECO:0007669"/>
    <property type="project" value="UniProtKB-KW"/>
</dbReference>
<dbReference type="GO" id="GO:0000166">
    <property type="term" value="F:nucleotide binding"/>
    <property type="evidence" value="ECO:0007669"/>
    <property type="project" value="InterPro"/>
</dbReference>
<dbReference type="GO" id="GO:0006261">
    <property type="term" value="P:DNA-templated DNA replication"/>
    <property type="evidence" value="ECO:0007669"/>
    <property type="project" value="TreeGrafter"/>
</dbReference>
<dbReference type="CDD" id="cd05780">
    <property type="entry name" value="DNA_polB_Kod1_like_exo"/>
    <property type="match status" value="1"/>
</dbReference>
<dbReference type="CDD" id="cd05536">
    <property type="entry name" value="POLBc_B3"/>
    <property type="match status" value="1"/>
</dbReference>
<dbReference type="FunFam" id="3.30.342.10:FF:000015">
    <property type="entry name" value="DNA polymerase"/>
    <property type="match status" value="1"/>
</dbReference>
<dbReference type="FunFam" id="1.10.132.60:FF:000013">
    <property type="entry name" value="DNA polymerase Pol2"/>
    <property type="match status" value="1"/>
</dbReference>
<dbReference type="Gene3D" id="1.10.132.60">
    <property type="entry name" value="DNA polymerase family B, C-terminal domain"/>
    <property type="match status" value="1"/>
</dbReference>
<dbReference type="Gene3D" id="3.30.342.10">
    <property type="entry name" value="DNA Polymerase, chain B, domain 1"/>
    <property type="match status" value="1"/>
</dbReference>
<dbReference type="Gene3D" id="1.10.287.690">
    <property type="entry name" value="Helix hairpin bin"/>
    <property type="match status" value="1"/>
</dbReference>
<dbReference type="Gene3D" id="3.90.1600.10">
    <property type="entry name" value="Palm domain of DNA polymerase"/>
    <property type="match status" value="1"/>
</dbReference>
<dbReference type="Gene3D" id="3.30.420.10">
    <property type="entry name" value="Ribonuclease H-like superfamily/Ribonuclease H"/>
    <property type="match status" value="1"/>
</dbReference>
<dbReference type="InterPro" id="IPR006172">
    <property type="entry name" value="DNA-dir_DNA_pol_B"/>
</dbReference>
<dbReference type="InterPro" id="IPR017964">
    <property type="entry name" value="DNA-dir_DNA_pol_B_CS"/>
</dbReference>
<dbReference type="InterPro" id="IPR006133">
    <property type="entry name" value="DNA-dir_DNA_pol_B_exonuc"/>
</dbReference>
<dbReference type="InterPro" id="IPR006134">
    <property type="entry name" value="DNA-dir_DNA_pol_B_multi_dom"/>
</dbReference>
<dbReference type="InterPro" id="IPR043502">
    <property type="entry name" value="DNA/RNA_pol_sf"/>
</dbReference>
<dbReference type="InterPro" id="IPR042087">
    <property type="entry name" value="DNA_pol_B_thumb"/>
</dbReference>
<dbReference type="InterPro" id="IPR023211">
    <property type="entry name" value="DNA_pol_palm_dom_sf"/>
</dbReference>
<dbReference type="InterPro" id="IPR050240">
    <property type="entry name" value="DNA_pol_type-B"/>
</dbReference>
<dbReference type="InterPro" id="IPR012337">
    <property type="entry name" value="RNaseH-like_sf"/>
</dbReference>
<dbReference type="InterPro" id="IPR036397">
    <property type="entry name" value="RNaseH_sf"/>
</dbReference>
<dbReference type="NCBIfam" id="TIGR00592">
    <property type="entry name" value="pol2"/>
    <property type="match status" value="2"/>
</dbReference>
<dbReference type="PANTHER" id="PTHR10322">
    <property type="entry name" value="DNA POLYMERASE CATALYTIC SUBUNIT"/>
    <property type="match status" value="1"/>
</dbReference>
<dbReference type="PANTHER" id="PTHR10322:SF23">
    <property type="entry name" value="DNA POLYMERASE DELTA CATALYTIC SUBUNIT"/>
    <property type="match status" value="1"/>
</dbReference>
<dbReference type="Pfam" id="PF00136">
    <property type="entry name" value="DNA_pol_B"/>
    <property type="match status" value="1"/>
</dbReference>
<dbReference type="Pfam" id="PF03104">
    <property type="entry name" value="DNA_pol_B_exo1"/>
    <property type="match status" value="1"/>
</dbReference>
<dbReference type="PRINTS" id="PR00106">
    <property type="entry name" value="DNAPOLB"/>
</dbReference>
<dbReference type="SMART" id="SM00486">
    <property type="entry name" value="POLBc"/>
    <property type="match status" value="1"/>
</dbReference>
<dbReference type="SUPFAM" id="SSF56672">
    <property type="entry name" value="DNA/RNA polymerases"/>
    <property type="match status" value="1"/>
</dbReference>
<dbReference type="SUPFAM" id="SSF53098">
    <property type="entry name" value="Ribonuclease H-like"/>
    <property type="match status" value="1"/>
</dbReference>
<dbReference type="PROSITE" id="PS00116">
    <property type="entry name" value="DNA_POLYMERASE_B"/>
    <property type="match status" value="1"/>
</dbReference>
<keyword id="KW-0002">3D-structure</keyword>
<keyword id="KW-0235">DNA replication</keyword>
<keyword id="KW-0238">DNA-binding</keyword>
<keyword id="KW-0239">DNA-directed DNA polymerase</keyword>
<keyword id="KW-0548">Nucleotidyltransferase</keyword>
<keyword id="KW-0808">Transferase</keyword>
<protein>
    <recommendedName>
        <fullName>DNA polymerase 1</fullName>
        <ecNumber>2.7.7.7</ecNumber>
    </recommendedName>
    <alternativeName>
        <fullName>Pab polymerase</fullName>
    </alternativeName>
</protein>